<name>SYD_BACFR</name>
<feature type="chain" id="PRO_0000110824" description="Aspartate--tRNA ligase">
    <location>
        <begin position="1"/>
        <end position="585"/>
    </location>
</feature>
<feature type="region of interest" description="Aspartate" evidence="1">
    <location>
        <begin position="197"/>
        <end position="200"/>
    </location>
</feature>
<feature type="binding site" evidence="1">
    <location>
        <position position="173"/>
    </location>
    <ligand>
        <name>L-aspartate</name>
        <dbReference type="ChEBI" id="CHEBI:29991"/>
    </ligand>
</feature>
<feature type="binding site" evidence="1">
    <location>
        <begin position="219"/>
        <end position="221"/>
    </location>
    <ligand>
        <name>ATP</name>
        <dbReference type="ChEBI" id="CHEBI:30616"/>
    </ligand>
</feature>
<feature type="binding site" evidence="1">
    <location>
        <position position="219"/>
    </location>
    <ligand>
        <name>L-aspartate</name>
        <dbReference type="ChEBI" id="CHEBI:29991"/>
    </ligand>
</feature>
<feature type="binding site" evidence="1">
    <location>
        <position position="228"/>
    </location>
    <ligand>
        <name>ATP</name>
        <dbReference type="ChEBI" id="CHEBI:30616"/>
    </ligand>
</feature>
<feature type="binding site" evidence="1">
    <location>
        <position position="446"/>
    </location>
    <ligand>
        <name>L-aspartate</name>
        <dbReference type="ChEBI" id="CHEBI:29991"/>
    </ligand>
</feature>
<feature type="binding site" evidence="1">
    <location>
        <position position="480"/>
    </location>
    <ligand>
        <name>ATP</name>
        <dbReference type="ChEBI" id="CHEBI:30616"/>
    </ligand>
</feature>
<feature type="binding site" evidence="1">
    <location>
        <position position="487"/>
    </location>
    <ligand>
        <name>L-aspartate</name>
        <dbReference type="ChEBI" id="CHEBI:29991"/>
    </ligand>
</feature>
<feature type="binding site" evidence="1">
    <location>
        <begin position="532"/>
        <end position="535"/>
    </location>
    <ligand>
        <name>ATP</name>
        <dbReference type="ChEBI" id="CHEBI:30616"/>
    </ligand>
</feature>
<keyword id="KW-0030">Aminoacyl-tRNA synthetase</keyword>
<keyword id="KW-0067">ATP-binding</keyword>
<keyword id="KW-0963">Cytoplasm</keyword>
<keyword id="KW-0436">Ligase</keyword>
<keyword id="KW-0547">Nucleotide-binding</keyword>
<keyword id="KW-0648">Protein biosynthesis</keyword>
<protein>
    <recommendedName>
        <fullName evidence="1">Aspartate--tRNA ligase</fullName>
        <ecNumber evidence="1">6.1.1.12</ecNumber>
    </recommendedName>
    <alternativeName>
        <fullName evidence="1">Aspartyl-tRNA synthetase</fullName>
        <shortName evidence="1">AspRS</shortName>
    </alternativeName>
</protein>
<gene>
    <name evidence="1" type="primary">aspS</name>
    <name type="ordered locus">BF2379</name>
</gene>
<sequence>MFRTHTCGELRISDVNKQVKLSGWVQRSRKMGGMTFVDLRDRYGITQLVFNEEIDAELCERANKLGREFVIQIVGTVNERFSKNSHIPTGDIEIIVSELNILNSAITPPFTIEDNTDGGDDIRMKYRYLDLRRSAVRSNLELRHKMTIEVRSYLDKLGFLEVETPVLIGSTPEGARDFVVPSRMNPGQFYALPQSPQTLKQLLMVSGFDRYFQIAKCFRDEDLRADRQPEFTQIDCEMSFVEQEDVITTFEGMAKHLFKVIRNIELTGPFPRMPWSEAMRLYGSDKPDIRFGMQFVELMDILKGHGFSVFDNATYIGGICAEGAAGYTRKQLDALTEFVKKPQIGAKGMVYARIEADGTVKSSVDKFYIQEVLQQLKEAFGAKPGDLILILSGDDAMKTRKQLCELRLEMGNQLGLRDKNTFACLWVVDFPLFEWSEEEGRLMAMHHPFTSPKPEDIHLLDTNPAAVRANAYDMVINGVEVGGGSIRIHDSQLQNKMFELLGFTPERAQEQFGFLMNAFKFGAPPHGGLAYGLDRWVSLFAGLDSIRDCIAFPKNNSGRDVMLDAPAALDPSQLEELNLIVDIKE</sequence>
<accession>Q64TQ1</accession>
<proteinExistence type="inferred from homology"/>
<organism>
    <name type="scientific">Bacteroides fragilis (strain YCH46)</name>
    <dbReference type="NCBI Taxonomy" id="295405"/>
    <lineage>
        <taxon>Bacteria</taxon>
        <taxon>Pseudomonadati</taxon>
        <taxon>Bacteroidota</taxon>
        <taxon>Bacteroidia</taxon>
        <taxon>Bacteroidales</taxon>
        <taxon>Bacteroidaceae</taxon>
        <taxon>Bacteroides</taxon>
    </lineage>
</organism>
<dbReference type="EC" id="6.1.1.12" evidence="1"/>
<dbReference type="EMBL" id="AP006841">
    <property type="protein sequence ID" value="BAD49128.1"/>
    <property type="molecule type" value="Genomic_DNA"/>
</dbReference>
<dbReference type="RefSeq" id="WP_011202848.1">
    <property type="nucleotide sequence ID" value="NC_006347.1"/>
</dbReference>
<dbReference type="RefSeq" id="YP_099662.1">
    <property type="nucleotide sequence ID" value="NC_006347.1"/>
</dbReference>
<dbReference type="SMR" id="Q64TQ1"/>
<dbReference type="STRING" id="295405.BF2379"/>
<dbReference type="KEGG" id="bfr:BF2379"/>
<dbReference type="PATRIC" id="fig|295405.11.peg.2298"/>
<dbReference type="HOGENOM" id="CLU_014330_3_2_10"/>
<dbReference type="OrthoDB" id="9802326at2"/>
<dbReference type="Proteomes" id="UP000002197">
    <property type="component" value="Chromosome"/>
</dbReference>
<dbReference type="GO" id="GO:0005737">
    <property type="term" value="C:cytoplasm"/>
    <property type="evidence" value="ECO:0007669"/>
    <property type="project" value="UniProtKB-SubCell"/>
</dbReference>
<dbReference type="GO" id="GO:0004815">
    <property type="term" value="F:aspartate-tRNA ligase activity"/>
    <property type="evidence" value="ECO:0007669"/>
    <property type="project" value="UniProtKB-UniRule"/>
</dbReference>
<dbReference type="GO" id="GO:0005524">
    <property type="term" value="F:ATP binding"/>
    <property type="evidence" value="ECO:0007669"/>
    <property type="project" value="UniProtKB-UniRule"/>
</dbReference>
<dbReference type="GO" id="GO:0003676">
    <property type="term" value="F:nucleic acid binding"/>
    <property type="evidence" value="ECO:0007669"/>
    <property type="project" value="InterPro"/>
</dbReference>
<dbReference type="GO" id="GO:0006422">
    <property type="term" value="P:aspartyl-tRNA aminoacylation"/>
    <property type="evidence" value="ECO:0007669"/>
    <property type="project" value="UniProtKB-UniRule"/>
</dbReference>
<dbReference type="CDD" id="cd00777">
    <property type="entry name" value="AspRS_core"/>
    <property type="match status" value="1"/>
</dbReference>
<dbReference type="CDD" id="cd04317">
    <property type="entry name" value="EcAspRS_like_N"/>
    <property type="match status" value="1"/>
</dbReference>
<dbReference type="Gene3D" id="3.30.930.10">
    <property type="entry name" value="Bira Bifunctional Protein, Domain 2"/>
    <property type="match status" value="1"/>
</dbReference>
<dbReference type="Gene3D" id="3.30.1360.30">
    <property type="entry name" value="GAD-like domain"/>
    <property type="match status" value="1"/>
</dbReference>
<dbReference type="Gene3D" id="2.40.50.140">
    <property type="entry name" value="Nucleic acid-binding proteins"/>
    <property type="match status" value="1"/>
</dbReference>
<dbReference type="HAMAP" id="MF_00044">
    <property type="entry name" value="Asp_tRNA_synth_type1"/>
    <property type="match status" value="1"/>
</dbReference>
<dbReference type="InterPro" id="IPR004364">
    <property type="entry name" value="Aa-tRNA-synt_II"/>
</dbReference>
<dbReference type="InterPro" id="IPR006195">
    <property type="entry name" value="aa-tRNA-synth_II"/>
</dbReference>
<dbReference type="InterPro" id="IPR045864">
    <property type="entry name" value="aa-tRNA-synth_II/BPL/LPL"/>
</dbReference>
<dbReference type="InterPro" id="IPR004524">
    <property type="entry name" value="Asp-tRNA-ligase_1"/>
</dbReference>
<dbReference type="InterPro" id="IPR047089">
    <property type="entry name" value="Asp-tRNA-ligase_1_N"/>
</dbReference>
<dbReference type="InterPro" id="IPR002312">
    <property type="entry name" value="Asp/Asn-tRNA-synth_IIb"/>
</dbReference>
<dbReference type="InterPro" id="IPR047090">
    <property type="entry name" value="AspRS_core"/>
</dbReference>
<dbReference type="InterPro" id="IPR004115">
    <property type="entry name" value="GAD-like_sf"/>
</dbReference>
<dbReference type="InterPro" id="IPR029351">
    <property type="entry name" value="GAD_dom"/>
</dbReference>
<dbReference type="InterPro" id="IPR012340">
    <property type="entry name" value="NA-bd_OB-fold"/>
</dbReference>
<dbReference type="InterPro" id="IPR004365">
    <property type="entry name" value="NA-bd_OB_tRNA"/>
</dbReference>
<dbReference type="NCBIfam" id="TIGR00459">
    <property type="entry name" value="aspS_bact"/>
    <property type="match status" value="1"/>
</dbReference>
<dbReference type="NCBIfam" id="NF001750">
    <property type="entry name" value="PRK00476.1"/>
    <property type="match status" value="1"/>
</dbReference>
<dbReference type="PANTHER" id="PTHR22594:SF5">
    <property type="entry name" value="ASPARTATE--TRNA LIGASE, MITOCHONDRIAL"/>
    <property type="match status" value="1"/>
</dbReference>
<dbReference type="PANTHER" id="PTHR22594">
    <property type="entry name" value="ASPARTYL/LYSYL-TRNA SYNTHETASE"/>
    <property type="match status" value="1"/>
</dbReference>
<dbReference type="Pfam" id="PF02938">
    <property type="entry name" value="GAD"/>
    <property type="match status" value="1"/>
</dbReference>
<dbReference type="Pfam" id="PF00152">
    <property type="entry name" value="tRNA-synt_2"/>
    <property type="match status" value="1"/>
</dbReference>
<dbReference type="Pfam" id="PF01336">
    <property type="entry name" value="tRNA_anti-codon"/>
    <property type="match status" value="1"/>
</dbReference>
<dbReference type="PRINTS" id="PR01042">
    <property type="entry name" value="TRNASYNTHASP"/>
</dbReference>
<dbReference type="SUPFAM" id="SSF55681">
    <property type="entry name" value="Class II aaRS and biotin synthetases"/>
    <property type="match status" value="1"/>
</dbReference>
<dbReference type="SUPFAM" id="SSF55261">
    <property type="entry name" value="GAD domain-like"/>
    <property type="match status" value="1"/>
</dbReference>
<dbReference type="SUPFAM" id="SSF50249">
    <property type="entry name" value="Nucleic acid-binding proteins"/>
    <property type="match status" value="1"/>
</dbReference>
<dbReference type="PROSITE" id="PS50862">
    <property type="entry name" value="AA_TRNA_LIGASE_II"/>
    <property type="match status" value="1"/>
</dbReference>
<comment type="function">
    <text evidence="1">Catalyzes the attachment of L-aspartate to tRNA(Asp) in a two-step reaction: L-aspartate is first activated by ATP to form Asp-AMP and then transferred to the acceptor end of tRNA(Asp).</text>
</comment>
<comment type="catalytic activity">
    <reaction evidence="1">
        <text>tRNA(Asp) + L-aspartate + ATP = L-aspartyl-tRNA(Asp) + AMP + diphosphate</text>
        <dbReference type="Rhea" id="RHEA:19649"/>
        <dbReference type="Rhea" id="RHEA-COMP:9660"/>
        <dbReference type="Rhea" id="RHEA-COMP:9678"/>
        <dbReference type="ChEBI" id="CHEBI:29991"/>
        <dbReference type="ChEBI" id="CHEBI:30616"/>
        <dbReference type="ChEBI" id="CHEBI:33019"/>
        <dbReference type="ChEBI" id="CHEBI:78442"/>
        <dbReference type="ChEBI" id="CHEBI:78516"/>
        <dbReference type="ChEBI" id="CHEBI:456215"/>
        <dbReference type="EC" id="6.1.1.12"/>
    </reaction>
</comment>
<comment type="subunit">
    <text evidence="1">Homodimer.</text>
</comment>
<comment type="subcellular location">
    <subcellularLocation>
        <location evidence="1">Cytoplasm</location>
    </subcellularLocation>
</comment>
<comment type="similarity">
    <text evidence="1">Belongs to the class-II aminoacyl-tRNA synthetase family. Type 1 subfamily.</text>
</comment>
<evidence type="ECO:0000255" key="1">
    <source>
        <dbReference type="HAMAP-Rule" id="MF_00044"/>
    </source>
</evidence>
<reference key="1">
    <citation type="journal article" date="2004" name="Proc. Natl. Acad. Sci. U.S.A.">
        <title>Genomic analysis of Bacteroides fragilis reveals extensive DNA inversions regulating cell surface adaptation.</title>
        <authorList>
            <person name="Kuwahara T."/>
            <person name="Yamashita A."/>
            <person name="Hirakawa H."/>
            <person name="Nakayama H."/>
            <person name="Toh H."/>
            <person name="Okada N."/>
            <person name="Kuhara S."/>
            <person name="Hattori M."/>
            <person name="Hayashi T."/>
            <person name="Ohnishi Y."/>
        </authorList>
    </citation>
    <scope>NUCLEOTIDE SEQUENCE [LARGE SCALE GENOMIC DNA]</scope>
    <source>
        <strain>YCH46</strain>
    </source>
</reference>